<proteinExistence type="evidence at protein level"/>
<reference key="1">
    <citation type="journal article" date="1998" name="Mol. Biol. Cell">
        <title>DdLIM is a cytoskeleton-associated protein involved in the protrusion of lamellipodia in Dictyostelium.</title>
        <authorList>
            <person name="Prassler J."/>
            <person name="Murr A."/>
            <person name="Stocker S."/>
            <person name="Faix J."/>
            <person name="Murphy J."/>
            <person name="Marriott G."/>
        </authorList>
    </citation>
    <scope>NUCLEOTIDE SEQUENCE [MRNA]</scope>
    <scope>SUBCELLULAR LOCATION</scope>
    <scope>DEVELOPMENTAL STAGE</scope>
    <scope>INTERACTION WITH RAC1A</scope>
    <source>
        <strain>AX3</strain>
    </source>
</reference>
<reference key="2">
    <citation type="journal article" date="2005" name="Nature">
        <title>The genome of the social amoeba Dictyostelium discoideum.</title>
        <authorList>
            <person name="Eichinger L."/>
            <person name="Pachebat J.A."/>
            <person name="Gloeckner G."/>
            <person name="Rajandream M.A."/>
            <person name="Sucgang R."/>
            <person name="Berriman M."/>
            <person name="Song J."/>
            <person name="Olsen R."/>
            <person name="Szafranski K."/>
            <person name="Xu Q."/>
            <person name="Tunggal B."/>
            <person name="Kummerfeld S."/>
            <person name="Madera M."/>
            <person name="Konfortov B.A."/>
            <person name="Rivero F."/>
            <person name="Bankier A.T."/>
            <person name="Lehmann R."/>
            <person name="Hamlin N."/>
            <person name="Davies R."/>
            <person name="Gaudet P."/>
            <person name="Fey P."/>
            <person name="Pilcher K."/>
            <person name="Chen G."/>
            <person name="Saunders D."/>
            <person name="Sodergren E.J."/>
            <person name="Davis P."/>
            <person name="Kerhornou A."/>
            <person name="Nie X."/>
            <person name="Hall N."/>
            <person name="Anjard C."/>
            <person name="Hemphill L."/>
            <person name="Bason N."/>
            <person name="Farbrother P."/>
            <person name="Desany B."/>
            <person name="Just E."/>
            <person name="Morio T."/>
            <person name="Rost R."/>
            <person name="Churcher C.M."/>
            <person name="Cooper J."/>
            <person name="Haydock S."/>
            <person name="van Driessche N."/>
            <person name="Cronin A."/>
            <person name="Goodhead I."/>
            <person name="Muzny D.M."/>
            <person name="Mourier T."/>
            <person name="Pain A."/>
            <person name="Lu M."/>
            <person name="Harper D."/>
            <person name="Lindsay R."/>
            <person name="Hauser H."/>
            <person name="James K.D."/>
            <person name="Quiles M."/>
            <person name="Madan Babu M."/>
            <person name="Saito T."/>
            <person name="Buchrieser C."/>
            <person name="Wardroper A."/>
            <person name="Felder M."/>
            <person name="Thangavelu M."/>
            <person name="Johnson D."/>
            <person name="Knights A."/>
            <person name="Loulseged H."/>
            <person name="Mungall K.L."/>
            <person name="Oliver K."/>
            <person name="Price C."/>
            <person name="Quail M.A."/>
            <person name="Urushihara H."/>
            <person name="Hernandez J."/>
            <person name="Rabbinowitsch E."/>
            <person name="Steffen D."/>
            <person name="Sanders M."/>
            <person name="Ma J."/>
            <person name="Kohara Y."/>
            <person name="Sharp S."/>
            <person name="Simmonds M.N."/>
            <person name="Spiegler S."/>
            <person name="Tivey A."/>
            <person name="Sugano S."/>
            <person name="White B."/>
            <person name="Walker D."/>
            <person name="Woodward J.R."/>
            <person name="Winckler T."/>
            <person name="Tanaka Y."/>
            <person name="Shaulsky G."/>
            <person name="Schleicher M."/>
            <person name="Weinstock G.M."/>
            <person name="Rosenthal A."/>
            <person name="Cox E.C."/>
            <person name="Chisholm R.L."/>
            <person name="Gibbs R.A."/>
            <person name="Loomis W.F."/>
            <person name="Platzer M."/>
            <person name="Kay R.R."/>
            <person name="Williams J.G."/>
            <person name="Dear P.H."/>
            <person name="Noegel A.A."/>
            <person name="Barrell B.G."/>
            <person name="Kuspa A."/>
        </authorList>
    </citation>
    <scope>NUCLEOTIDE SEQUENCE [LARGE SCALE GENOMIC DNA]</scope>
    <source>
        <strain>AX4</strain>
    </source>
</reference>
<reference key="3">
    <citation type="journal article" date="2003" name="Cell Motil. Cytoskeleton">
        <title>A Lim protein involved in the progression of cytokinesis and regulation of the mitotic spindle.</title>
        <authorList>
            <person name="Schneider N."/>
            <person name="Weber I."/>
            <person name="Faix J."/>
            <person name="Prassler J."/>
            <person name="Mueller-Taubenberger A."/>
            <person name="Koehler J."/>
            <person name="Burghardt E."/>
            <person name="Gerisch G."/>
            <person name="Marriott G."/>
        </authorList>
    </citation>
    <scope>FUNCTION</scope>
    <scope>SUBCELLULAR LOCATION</scope>
    <scope>DEVELOPMENTAL STAGE</scope>
    <scope>DISRUPTION PHENOTYPE</scope>
</reference>
<name>LIME_DICDI</name>
<dbReference type="EMBL" id="U97699">
    <property type="protein sequence ID" value="AAC05729.1"/>
    <property type="molecule type" value="mRNA"/>
</dbReference>
<dbReference type="EMBL" id="AAFI02000031">
    <property type="protein sequence ID" value="EAL67646.1"/>
    <property type="molecule type" value="Genomic_DNA"/>
</dbReference>
<dbReference type="RefSeq" id="XP_641675.1">
    <property type="nucleotide sequence ID" value="XM_636583.1"/>
</dbReference>
<dbReference type="FunCoup" id="O60952">
    <property type="interactions" value="476"/>
</dbReference>
<dbReference type="IntAct" id="O60952">
    <property type="interactions" value="2"/>
</dbReference>
<dbReference type="STRING" id="44689.O60952"/>
<dbReference type="PaxDb" id="44689-DDB0214939"/>
<dbReference type="EnsemblProtists" id="EAL67646">
    <property type="protein sequence ID" value="EAL67646"/>
    <property type="gene ID" value="DDB_G0279415"/>
</dbReference>
<dbReference type="GeneID" id="8622083"/>
<dbReference type="KEGG" id="ddi:DDB_G0279415"/>
<dbReference type="dictyBase" id="DDB_G0279415">
    <property type="gene designation" value="limE"/>
</dbReference>
<dbReference type="VEuPathDB" id="AmoebaDB:DDB_G0279415"/>
<dbReference type="eggNOG" id="KOG1702">
    <property type="taxonomic scope" value="Eukaryota"/>
</dbReference>
<dbReference type="HOGENOM" id="CLU_1374438_0_0_1"/>
<dbReference type="InParanoid" id="O60952"/>
<dbReference type="OMA" id="FEGKLYC"/>
<dbReference type="PhylomeDB" id="O60952"/>
<dbReference type="Reactome" id="R-DDI-983231">
    <property type="pathway name" value="Factors involved in megakaryocyte development and platelet production"/>
</dbReference>
<dbReference type="PRO" id="PR:O60952"/>
<dbReference type="Proteomes" id="UP000002195">
    <property type="component" value="Chromosome 3"/>
</dbReference>
<dbReference type="GO" id="GO:0015629">
    <property type="term" value="C:actin cytoskeleton"/>
    <property type="evidence" value="ECO:0000314"/>
    <property type="project" value="dictyBase"/>
</dbReference>
<dbReference type="GO" id="GO:0030864">
    <property type="term" value="C:cortical actin cytoskeleton"/>
    <property type="evidence" value="ECO:0000314"/>
    <property type="project" value="dictyBase"/>
</dbReference>
<dbReference type="GO" id="GO:0031012">
    <property type="term" value="C:extracellular matrix"/>
    <property type="evidence" value="ECO:0007005"/>
    <property type="project" value="dictyBase"/>
</dbReference>
<dbReference type="GO" id="GO:0030175">
    <property type="term" value="C:filopodium"/>
    <property type="evidence" value="ECO:0007669"/>
    <property type="project" value="UniProtKB-SubCell"/>
</dbReference>
<dbReference type="GO" id="GO:0030027">
    <property type="term" value="C:lamellipodium"/>
    <property type="evidence" value="ECO:0007669"/>
    <property type="project" value="UniProtKB-SubCell"/>
</dbReference>
<dbReference type="GO" id="GO:0005634">
    <property type="term" value="C:nucleus"/>
    <property type="evidence" value="ECO:0007669"/>
    <property type="project" value="UniProtKB-SubCell"/>
</dbReference>
<dbReference type="GO" id="GO:0005886">
    <property type="term" value="C:plasma membrane"/>
    <property type="evidence" value="ECO:0000314"/>
    <property type="project" value="dictyBase"/>
</dbReference>
<dbReference type="GO" id="GO:0031143">
    <property type="term" value="C:pseudopodium"/>
    <property type="evidence" value="ECO:0000314"/>
    <property type="project" value="dictyBase"/>
</dbReference>
<dbReference type="GO" id="GO:0051015">
    <property type="term" value="F:actin filament binding"/>
    <property type="evidence" value="ECO:0000318"/>
    <property type="project" value="GO_Central"/>
</dbReference>
<dbReference type="GO" id="GO:0046872">
    <property type="term" value="F:metal ion binding"/>
    <property type="evidence" value="ECO:0007669"/>
    <property type="project" value="UniProtKB-KW"/>
</dbReference>
<dbReference type="GO" id="GO:0051017">
    <property type="term" value="P:actin filament bundle assembly"/>
    <property type="evidence" value="ECO:0000318"/>
    <property type="project" value="GO_Central"/>
</dbReference>
<dbReference type="GO" id="GO:0043327">
    <property type="term" value="P:chemotaxis to cAMP"/>
    <property type="evidence" value="ECO:0000314"/>
    <property type="project" value="dictyBase"/>
</dbReference>
<dbReference type="CDD" id="cd09358">
    <property type="entry name" value="LIM_Mical_like"/>
    <property type="match status" value="1"/>
</dbReference>
<dbReference type="Gene3D" id="2.10.110.10">
    <property type="entry name" value="Cysteine Rich Protein"/>
    <property type="match status" value="1"/>
</dbReference>
<dbReference type="InterPro" id="IPR001781">
    <property type="entry name" value="Znf_LIM"/>
</dbReference>
<dbReference type="PANTHER" id="PTHR24206">
    <property type="entry name" value="OS06G0237300 PROTEIN"/>
    <property type="match status" value="1"/>
</dbReference>
<dbReference type="Pfam" id="PF00412">
    <property type="entry name" value="LIM"/>
    <property type="match status" value="1"/>
</dbReference>
<dbReference type="SMART" id="SM00132">
    <property type="entry name" value="LIM"/>
    <property type="match status" value="1"/>
</dbReference>
<dbReference type="SUPFAM" id="SSF57716">
    <property type="entry name" value="Glucocorticoid receptor-like (DNA-binding domain)"/>
    <property type="match status" value="2"/>
</dbReference>
<dbReference type="PROSITE" id="PS00478">
    <property type="entry name" value="LIM_DOMAIN_1"/>
    <property type="match status" value="1"/>
</dbReference>
<dbReference type="PROSITE" id="PS50023">
    <property type="entry name" value="LIM_DOMAIN_2"/>
    <property type="match status" value="1"/>
</dbReference>
<evidence type="ECO:0000255" key="1">
    <source>
        <dbReference type="PROSITE-ProRule" id="PRU00125"/>
    </source>
</evidence>
<evidence type="ECO:0000256" key="2">
    <source>
        <dbReference type="SAM" id="MobiDB-lite"/>
    </source>
</evidence>
<evidence type="ECO:0000269" key="3">
    <source>
    </source>
</evidence>
<evidence type="ECO:0000269" key="4">
    <source>
    </source>
</evidence>
<feature type="chain" id="PRO_0000328168" description="LIM domain-containing protein E">
    <location>
        <begin position="1"/>
        <end position="199"/>
    </location>
</feature>
<feature type="domain" description="LIM zinc-binding" evidence="1">
    <location>
        <begin position="5"/>
        <end position="65"/>
    </location>
</feature>
<feature type="region of interest" description="Disordered" evidence="2">
    <location>
        <begin position="134"/>
        <end position="199"/>
    </location>
</feature>
<feature type="compositionally biased region" description="Low complexity" evidence="2">
    <location>
        <begin position="146"/>
        <end position="155"/>
    </location>
</feature>
<feature type="compositionally biased region" description="Low complexity" evidence="2">
    <location>
        <begin position="163"/>
        <end position="174"/>
    </location>
</feature>
<feature type="compositionally biased region" description="Acidic residues" evidence="2">
    <location>
        <begin position="175"/>
        <end position="199"/>
    </location>
</feature>
<keyword id="KW-0131">Cell cycle</keyword>
<keyword id="KW-0966">Cell projection</keyword>
<keyword id="KW-0963">Cytoplasm</keyword>
<keyword id="KW-0206">Cytoskeleton</keyword>
<keyword id="KW-0440">LIM domain</keyword>
<keyword id="KW-0479">Metal-binding</keyword>
<keyword id="KW-0539">Nucleus</keyword>
<keyword id="KW-1185">Reference proteome</keyword>
<keyword id="KW-0862">Zinc</keyword>
<comment type="function">
    <text evidence="3">Associates with the actin cytoskeleton and may regulate actin polymerization in lamellipodia, through a rac1-dependent signaling pathway. May play a role in cell motility. Involved in cytokinesis by regulating the microtubule system and linking it to the cortical actin network.</text>
</comment>
<comment type="subunit">
    <text>May interact with rac1A.</text>
</comment>
<comment type="subcellular location">
    <subcellularLocation>
        <location>Cytoplasm</location>
    </subcellularLocation>
    <subcellularLocation>
        <location>Cytoplasm</location>
        <location>Cell cortex</location>
    </subcellularLocation>
    <subcellularLocation>
        <location>Nucleus</location>
    </subcellularLocation>
    <subcellularLocation>
        <location>Cell projection</location>
        <location>Lamellipodium</location>
    </subcellularLocation>
    <subcellularLocation>
        <location>Cell projection</location>
        <location>Filopodium</location>
    </subcellularLocation>
    <subcellularLocation>
        <location>Cytoplasm</location>
        <location>Cytoskeleton</location>
    </subcellularLocation>
    <text>Weakly expressed in cytoplasm. Found in actin-rich protrusions, and lamellipodia and filopodia during motility.</text>
</comment>
<comment type="developmental stage">
    <text evidence="3 4">Expressed from 0 hours to 12 hours upon starvation (at protein level). Expressed in the polar region during cytokinesis.</text>
</comment>
<comment type="disruption phenotype">
    <text evidence="3">Cells exhibit longer microtubules than normal. During mitosis, interphase microtubules and the spindle persist far longer than in wild-type cells.</text>
</comment>
<organism>
    <name type="scientific">Dictyostelium discoideum</name>
    <name type="common">Social amoeba</name>
    <dbReference type="NCBI Taxonomy" id="44689"/>
    <lineage>
        <taxon>Eukaryota</taxon>
        <taxon>Amoebozoa</taxon>
        <taxon>Evosea</taxon>
        <taxon>Eumycetozoa</taxon>
        <taxon>Dictyostelia</taxon>
        <taxon>Dictyosteliales</taxon>
        <taxon>Dictyosteliaceae</taxon>
        <taxon>Dictyostelium</taxon>
    </lineage>
</organism>
<accession>O60952</accession>
<accession>Q54WP2</accession>
<protein>
    <recommendedName>
        <fullName>LIM domain-containing protein E</fullName>
    </recommendedName>
    <alternativeName>
        <fullName>DdLim</fullName>
    </alternativeName>
</protein>
<sequence>MSASVKCGACAKTAYPLESVVANNNSYHKGCFKCSTCNSTLNVKTFKSFEGKLYCPVHTPKVSATAVTDSVALKNALNAPKKVAEGLGNAHRGLDEKPNIGLDSMATANALNAPKKVVEGLGNVQKGIGGKPTYAVFGADGQPTGEQQEQQQYTEEQYEQPQEEQQYQEEQQQYQEEEQQYQEEEQQYQEEEQQYEEEQ</sequence>
<gene>
    <name type="primary">limE</name>
    <name type="synonym">crp</name>
    <name type="ORF">DDB_G0279415</name>
</gene>